<gene>
    <name type="ordered locus">BCG9842_B1157</name>
</gene>
<proteinExistence type="inferred from homology"/>
<sequence length="376" mass="42132">MTVSKFVQIRRDLHRIPEIGFKEWETQQYILDYIGTLSLEFVEVKTWKTGVIVKVNGKNPEKIIGYRADIDGLPITEETGYEFASIHEGMMHACGHDVHTTIGLGLLTKAVSERIDDDLVFLFQPAEEGPGGALPMLESEELKEWKPNIILGLHIAPEYAVGTIATKEGLLFANTSELYIDLKGKGGHAAYPHTANDMIVAASHLVTQLQSVISRNVNPLDSAVITIGKITGGTVQNIIAEKSRLEGTIRTLSVESMKRVKSRIEAIVAGIEASFQCEAIIDYGAMYHQVYNHEELTREFMQFVHKQTDMNVITCTEAMTGEDFGYMLREIPGFMFWLGVNSEYGLHHAKLKPDEEVIEKAITFLSQYVKWKGNRK</sequence>
<accession>B7IVL7</accession>
<name>DAPEL_BACC2</name>
<feature type="chain" id="PRO_0000376742" description="N-acetyldiaminopimelate deacetylase">
    <location>
        <begin position="1"/>
        <end position="376"/>
    </location>
</feature>
<feature type="active site" evidence="1">
    <location>
        <position position="69"/>
    </location>
</feature>
<feature type="active site" description="Proton acceptor" evidence="1">
    <location>
        <position position="128"/>
    </location>
</feature>
<reference key="1">
    <citation type="submission" date="2008-10" db="EMBL/GenBank/DDBJ databases">
        <title>Genome sequence of Bacillus cereus G9842.</title>
        <authorList>
            <person name="Dodson R.J."/>
            <person name="Durkin A.S."/>
            <person name="Rosovitz M.J."/>
            <person name="Rasko D.A."/>
            <person name="Hoffmaster A."/>
            <person name="Ravel J."/>
            <person name="Sutton G."/>
        </authorList>
    </citation>
    <scope>NUCLEOTIDE SEQUENCE [LARGE SCALE GENOMIC DNA]</scope>
    <source>
        <strain>G9842</strain>
    </source>
</reference>
<keyword id="KW-0028">Amino-acid biosynthesis</keyword>
<keyword id="KW-0220">Diaminopimelate biosynthesis</keyword>
<keyword id="KW-0378">Hydrolase</keyword>
<keyword id="KW-0457">Lysine biosynthesis</keyword>
<dbReference type="EC" id="3.5.1.47" evidence="1"/>
<dbReference type="EMBL" id="CP001186">
    <property type="protein sequence ID" value="ACK96222.1"/>
    <property type="molecule type" value="Genomic_DNA"/>
</dbReference>
<dbReference type="RefSeq" id="WP_000218667.1">
    <property type="nucleotide sequence ID" value="NC_011772.1"/>
</dbReference>
<dbReference type="SMR" id="B7IVL7"/>
<dbReference type="MEROPS" id="M20.A27"/>
<dbReference type="KEGG" id="bcg:BCG9842_B1157"/>
<dbReference type="HOGENOM" id="CLU_023257_0_1_9"/>
<dbReference type="UniPathway" id="UPA00034">
    <property type="reaction ID" value="UER00024"/>
</dbReference>
<dbReference type="Proteomes" id="UP000006744">
    <property type="component" value="Chromosome"/>
</dbReference>
<dbReference type="GO" id="GO:0050118">
    <property type="term" value="F:N-acetyldiaminopimelate deacetylase activity"/>
    <property type="evidence" value="ECO:0007669"/>
    <property type="project" value="UniProtKB-UniRule"/>
</dbReference>
<dbReference type="GO" id="GO:0019877">
    <property type="term" value="P:diaminopimelate biosynthetic process"/>
    <property type="evidence" value="ECO:0007669"/>
    <property type="project" value="UniProtKB-UniRule"/>
</dbReference>
<dbReference type="GO" id="GO:0009089">
    <property type="term" value="P:lysine biosynthetic process via diaminopimelate"/>
    <property type="evidence" value="ECO:0007669"/>
    <property type="project" value="UniProtKB-UniRule"/>
</dbReference>
<dbReference type="CDD" id="cd05670">
    <property type="entry name" value="M20_Acy1_YkuR-like"/>
    <property type="match status" value="1"/>
</dbReference>
<dbReference type="FunFam" id="3.30.70.360:FF:000001">
    <property type="entry name" value="N-acetyldiaminopimelate deacetylase"/>
    <property type="match status" value="1"/>
</dbReference>
<dbReference type="Gene3D" id="3.30.70.360">
    <property type="match status" value="1"/>
</dbReference>
<dbReference type="Gene3D" id="3.40.630.10">
    <property type="entry name" value="Zn peptidases"/>
    <property type="match status" value="1"/>
</dbReference>
<dbReference type="HAMAP" id="MF_01692">
    <property type="entry name" value="DapEL"/>
    <property type="match status" value="1"/>
</dbReference>
<dbReference type="InterPro" id="IPR023905">
    <property type="entry name" value="AcetylDAP_deacetylase"/>
</dbReference>
<dbReference type="InterPro" id="IPR017439">
    <property type="entry name" value="Amidohydrolase"/>
</dbReference>
<dbReference type="InterPro" id="IPR036264">
    <property type="entry name" value="Bact_exopeptidase_dim_dom"/>
</dbReference>
<dbReference type="InterPro" id="IPR002933">
    <property type="entry name" value="Peptidase_M20"/>
</dbReference>
<dbReference type="InterPro" id="IPR011650">
    <property type="entry name" value="Peptidase_M20_dimer"/>
</dbReference>
<dbReference type="NCBIfam" id="TIGR01891">
    <property type="entry name" value="amidohydrolases"/>
    <property type="match status" value="1"/>
</dbReference>
<dbReference type="PANTHER" id="PTHR11014:SF98">
    <property type="entry name" value="N-ACETYLDIAMINOPIMELATE DEACETYLASE"/>
    <property type="match status" value="1"/>
</dbReference>
<dbReference type="PANTHER" id="PTHR11014">
    <property type="entry name" value="PEPTIDASE M20 FAMILY MEMBER"/>
    <property type="match status" value="1"/>
</dbReference>
<dbReference type="Pfam" id="PF07687">
    <property type="entry name" value="M20_dimer"/>
    <property type="match status" value="1"/>
</dbReference>
<dbReference type="Pfam" id="PF01546">
    <property type="entry name" value="Peptidase_M20"/>
    <property type="match status" value="1"/>
</dbReference>
<dbReference type="PIRSF" id="PIRSF005962">
    <property type="entry name" value="Pept_M20D_amidohydro"/>
    <property type="match status" value="1"/>
</dbReference>
<dbReference type="SUPFAM" id="SSF55031">
    <property type="entry name" value="Bacterial exopeptidase dimerisation domain"/>
    <property type="match status" value="1"/>
</dbReference>
<dbReference type="SUPFAM" id="SSF53187">
    <property type="entry name" value="Zn-dependent exopeptidases"/>
    <property type="match status" value="1"/>
</dbReference>
<organism>
    <name type="scientific">Bacillus cereus (strain G9842)</name>
    <dbReference type="NCBI Taxonomy" id="405531"/>
    <lineage>
        <taxon>Bacteria</taxon>
        <taxon>Bacillati</taxon>
        <taxon>Bacillota</taxon>
        <taxon>Bacilli</taxon>
        <taxon>Bacillales</taxon>
        <taxon>Bacillaceae</taxon>
        <taxon>Bacillus</taxon>
        <taxon>Bacillus cereus group</taxon>
    </lineage>
</organism>
<protein>
    <recommendedName>
        <fullName evidence="1">N-acetyldiaminopimelate deacetylase</fullName>
        <ecNumber evidence="1">3.5.1.47</ecNumber>
    </recommendedName>
</protein>
<comment type="function">
    <text evidence="1">Catalyzes the conversion of N-acetyl-diaminopimelate to diaminopimelate and acetate.</text>
</comment>
<comment type="catalytic activity">
    <reaction evidence="1">
        <text>N-acetyl-(2S,6S)-2,6-diaminopimelate + H2O = (2S,6S)-2,6-diaminopimelate + acetate</text>
        <dbReference type="Rhea" id="RHEA:20405"/>
        <dbReference type="ChEBI" id="CHEBI:15377"/>
        <dbReference type="ChEBI" id="CHEBI:30089"/>
        <dbReference type="ChEBI" id="CHEBI:57609"/>
        <dbReference type="ChEBI" id="CHEBI:58767"/>
        <dbReference type="EC" id="3.5.1.47"/>
    </reaction>
</comment>
<comment type="pathway">
    <text evidence="1">Amino-acid biosynthesis; L-lysine biosynthesis via DAP pathway; LL-2,6-diaminopimelate from (S)-tetrahydrodipicolinate (acetylase route): step 3/3.</text>
</comment>
<comment type="similarity">
    <text evidence="1">Belongs to the peptidase M20A family. N-acetyldiaminopimelate deacetylase subfamily.</text>
</comment>
<evidence type="ECO:0000255" key="1">
    <source>
        <dbReference type="HAMAP-Rule" id="MF_01692"/>
    </source>
</evidence>